<comment type="function">
    <text evidence="1">An FAD assembly protein, which accelerates covalent attachment of the cofactor into other proteins. Plays an essential role in the assembly of succinate dehydrogenase (SDH, respiratory complex II), an enzyme complex that is a component of both the tricarboxylic acid cycle and the electron transport chain, and which couples the oxidation of succinate to fumarate with the reduction of ubiquinone (coenzyme Q) to ubiquinol. Required for flavinylation (covalent attachment of FAD) of the flavoprotein subunit SdhA of SDH and other flavinylated proteins as well.</text>
</comment>
<comment type="subunit">
    <text evidence="2">Monomer.</text>
</comment>
<comment type="subcellular location">
    <subcellularLocation>
        <location evidence="1">Cytoplasm</location>
    </subcellularLocation>
</comment>
<comment type="similarity">
    <text evidence="3">Belongs to the SdhE FAD assembly factor family.</text>
</comment>
<keyword id="KW-0143">Chaperone</keyword>
<keyword id="KW-0963">Cytoplasm</keyword>
<keyword id="KW-1185">Reference proteome</keyword>
<sequence>MEIDNKSRIHWACRRGMRELDIAIMPFFEHDYDTLNDSDKRAFVRLLQSDDPDLFNWLMNHGEPKDGELKRMISLIQTRNKDRGPVAM</sequence>
<feature type="chain" id="PRO_0000214397" description="FAD assembly factor SdhE">
    <location>
        <begin position="1"/>
        <end position="88"/>
    </location>
</feature>
<gene>
    <name type="primary">sdhE</name>
    <name type="ordered locus">ECA0759</name>
</gene>
<reference key="1">
    <citation type="journal article" date="2004" name="Proc. Natl. Acad. Sci. U.S.A.">
        <title>Genome sequence of the enterobacterial phytopathogen Erwinia carotovora subsp. atroseptica and characterization of virulence factors.</title>
        <authorList>
            <person name="Bell K.S."/>
            <person name="Sebaihia M."/>
            <person name="Pritchard L."/>
            <person name="Holden M.T.G."/>
            <person name="Hyman L.J."/>
            <person name="Holeva M.C."/>
            <person name="Thomson N.R."/>
            <person name="Bentley S.D."/>
            <person name="Churcher L.J.C."/>
            <person name="Mungall K."/>
            <person name="Atkin R."/>
            <person name="Bason N."/>
            <person name="Brooks K."/>
            <person name="Chillingworth T."/>
            <person name="Clark K."/>
            <person name="Doggett J."/>
            <person name="Fraser A."/>
            <person name="Hance Z."/>
            <person name="Hauser H."/>
            <person name="Jagels K."/>
            <person name="Moule S."/>
            <person name="Norbertczak H."/>
            <person name="Ormond D."/>
            <person name="Price C."/>
            <person name="Quail M.A."/>
            <person name="Sanders M."/>
            <person name="Walker D."/>
            <person name="Whitehead S."/>
            <person name="Salmond G.P.C."/>
            <person name="Birch P.R.J."/>
            <person name="Parkhill J."/>
            <person name="Toth I.K."/>
        </authorList>
    </citation>
    <scope>NUCLEOTIDE SEQUENCE [LARGE SCALE GENOMIC DNA]</scope>
    <source>
        <strain>SCRI 1043 / ATCC BAA-672</strain>
    </source>
</reference>
<dbReference type="EMBL" id="BX950851">
    <property type="protein sequence ID" value="CAG73673.1"/>
    <property type="molecule type" value="Genomic_DNA"/>
</dbReference>
<dbReference type="RefSeq" id="WP_011092366.1">
    <property type="nucleotide sequence ID" value="NC_004547.2"/>
</dbReference>
<dbReference type="SMR" id="Q6D960"/>
<dbReference type="STRING" id="218491.ECA0759"/>
<dbReference type="GeneID" id="57207489"/>
<dbReference type="KEGG" id="eca:ECA0759"/>
<dbReference type="PATRIC" id="fig|218491.5.peg.757"/>
<dbReference type="eggNOG" id="COG2938">
    <property type="taxonomic scope" value="Bacteria"/>
</dbReference>
<dbReference type="HOGENOM" id="CLU_103054_2_2_6"/>
<dbReference type="OrthoDB" id="9180899at2"/>
<dbReference type="Proteomes" id="UP000007966">
    <property type="component" value="Chromosome"/>
</dbReference>
<dbReference type="GO" id="GO:0005737">
    <property type="term" value="C:cytoplasm"/>
    <property type="evidence" value="ECO:0007669"/>
    <property type="project" value="UniProtKB-SubCell"/>
</dbReference>
<dbReference type="GO" id="GO:0006105">
    <property type="term" value="P:succinate metabolic process"/>
    <property type="evidence" value="ECO:0007669"/>
    <property type="project" value="TreeGrafter"/>
</dbReference>
<dbReference type="FunFam" id="1.10.150.250:FF:000001">
    <property type="entry name" value="FAD assembly factor SdhE"/>
    <property type="match status" value="1"/>
</dbReference>
<dbReference type="Gene3D" id="1.10.150.250">
    <property type="entry name" value="Flavinator of succinate dehydrogenase"/>
    <property type="match status" value="1"/>
</dbReference>
<dbReference type="InterPro" id="IPR005631">
    <property type="entry name" value="SDH"/>
</dbReference>
<dbReference type="InterPro" id="IPR036714">
    <property type="entry name" value="SDH_sf"/>
</dbReference>
<dbReference type="InterPro" id="IPR050531">
    <property type="entry name" value="SdhE_FAD_assembly_factor"/>
</dbReference>
<dbReference type="NCBIfam" id="NF008130">
    <property type="entry name" value="PRK10878.1"/>
    <property type="match status" value="1"/>
</dbReference>
<dbReference type="PANTHER" id="PTHR39585">
    <property type="entry name" value="FAD ASSEMBLY FACTOR SDHE"/>
    <property type="match status" value="1"/>
</dbReference>
<dbReference type="PANTHER" id="PTHR39585:SF1">
    <property type="entry name" value="FAD ASSEMBLY FACTOR SDHE"/>
    <property type="match status" value="1"/>
</dbReference>
<dbReference type="Pfam" id="PF03937">
    <property type="entry name" value="Sdh5"/>
    <property type="match status" value="1"/>
</dbReference>
<dbReference type="SUPFAM" id="SSF109910">
    <property type="entry name" value="YgfY-like"/>
    <property type="match status" value="1"/>
</dbReference>
<name>SDHE_PECAS</name>
<protein>
    <recommendedName>
        <fullName>FAD assembly factor SdhE</fullName>
    </recommendedName>
</protein>
<accession>Q6D960</accession>
<evidence type="ECO:0000250" key="1">
    <source>
        <dbReference type="UniProtKB" id="G4V4G2"/>
    </source>
</evidence>
<evidence type="ECO:0000250" key="2">
    <source>
        <dbReference type="UniProtKB" id="P64559"/>
    </source>
</evidence>
<evidence type="ECO:0000305" key="3"/>
<proteinExistence type="inferred from homology"/>
<organism>
    <name type="scientific">Pectobacterium atrosepticum (strain SCRI 1043 / ATCC BAA-672)</name>
    <name type="common">Erwinia carotovora subsp. atroseptica</name>
    <dbReference type="NCBI Taxonomy" id="218491"/>
    <lineage>
        <taxon>Bacteria</taxon>
        <taxon>Pseudomonadati</taxon>
        <taxon>Pseudomonadota</taxon>
        <taxon>Gammaproteobacteria</taxon>
        <taxon>Enterobacterales</taxon>
        <taxon>Pectobacteriaceae</taxon>
        <taxon>Pectobacterium</taxon>
    </lineage>
</organism>